<evidence type="ECO:0000250" key="1">
    <source>
        <dbReference type="UniProtKB" id="P69783"/>
    </source>
</evidence>
<evidence type="ECO:0000255" key="2">
    <source>
        <dbReference type="PROSITE-ProRule" id="PRU00416"/>
    </source>
</evidence>
<evidence type="ECO:0000303" key="3">
    <source>
    </source>
</evidence>
<evidence type="ECO:0000305" key="4"/>
<evidence type="ECO:0000305" key="5">
    <source>
    </source>
</evidence>
<evidence type="ECO:0007829" key="6">
    <source>
        <dbReference type="PDB" id="2GPR"/>
    </source>
</evidence>
<reference key="1">
    <citation type="journal article" date="1994" name="Protein Sci.">
        <title>Unique dicistronic operon (ptsI-crr) in Mycoplasma capricolum encoding enzyme I and the glucose-specific enzyme IIA of the phosphoenolpyruvate:sugar phosphotransferase system: cloning, sequencing, promoter analysis, and protein characterization.</title>
        <authorList>
            <person name="Zhu P.-P."/>
            <person name="Reizer J."/>
            <person name="Peterkofsky A."/>
        </authorList>
    </citation>
    <scope>NUCLEOTIDE SEQUENCE [GENOMIC DNA]</scope>
    <scope>FUNCTION</scope>
</reference>
<reference key="2">
    <citation type="submission" date="2005-09" db="EMBL/GenBank/DDBJ databases">
        <authorList>
            <person name="Glass J.I."/>
            <person name="Lartigue C."/>
            <person name="Pfannkoch C."/>
            <person name="Baden-Tillson H."/>
            <person name="Smith H.O."/>
            <person name="Venter J.C."/>
            <person name="Roske K."/>
            <person name="Wise K.S."/>
            <person name="Calcutt M.J."/>
            <person name="Nelson W.C."/>
            <person name="Nierman W.C."/>
        </authorList>
    </citation>
    <scope>NUCLEOTIDE SEQUENCE [LARGE SCALE GENOMIC DNA]</scope>
    <source>
        <strain>California kid / ATCC 27343 / NCTC 10154</strain>
    </source>
</reference>
<reference key="3">
    <citation type="journal article" date="1998" name="Structure">
        <title>A promiscuous binding surface: crystal structure of the IIA domain of the glucose-specific permease from Mycoplasma capricolum.</title>
        <authorList>
            <person name="Huang K."/>
            <person name="Kapadia G."/>
            <person name="Zhu P.-P."/>
            <person name="Peterkofsky A."/>
            <person name="Herzberg O."/>
        </authorList>
    </citation>
    <scope>X-RAY CRYSTALLOGRAPHY (2.5 ANGSTROMS)</scope>
</reference>
<keyword id="KW-0002">3D-structure</keyword>
<keyword id="KW-0963">Cytoplasm</keyword>
<keyword id="KW-0418">Kinase</keyword>
<keyword id="KW-0479">Metal-binding</keyword>
<keyword id="KW-0597">Phosphoprotein</keyword>
<keyword id="KW-0598">Phosphotransferase system</keyword>
<keyword id="KW-0762">Sugar transport</keyword>
<keyword id="KW-0808">Transferase</keyword>
<keyword id="KW-0813">Transport</keyword>
<keyword id="KW-0862">Zinc</keyword>
<name>PTGA_MYCCT</name>
<sequence>MWFFNKNLKVLAPCDGTIITLDEVEDEVFKERMLGDGFAINPKSNDFHAPVSGKLVTAFPTKHAFGIQTKSGVEILLHIGLDTVSLDGNGFESFVTQDQEVNAGDKLVTVDLKSVAKKVPSIKSPIIFTNNGGKTLEIVKMGEVKQGDVVAILK</sequence>
<comment type="function">
    <text evidence="1 5">The phosphoenolpyruvate-dependent sugar phosphotransferase system (sugar PTS), a major carbohydrate active transport system, catalyzes the phosphorylation of incoming sugar substrates concomitantly with their translocation across the cell membrane. The enzyme II complex composed of PtsG and Crr is involved in glucose transport.</text>
</comment>
<comment type="cofactor">
    <cofactor evidence="1">
        <name>Zn(2+)</name>
        <dbReference type="ChEBI" id="CHEBI:29105"/>
    </cofactor>
    <text evidence="1">Binds 1 zinc ion per glycerol kinase EIIA-Glc dimer. The zinc ion is important for dimerization.</text>
</comment>
<comment type="subunit">
    <text evidence="1">Heterodimer with glycerol kinase (glpk).</text>
</comment>
<comment type="subcellular location">
    <subcellularLocation>
        <location evidence="4">Cytoplasm</location>
    </subcellularLocation>
</comment>
<comment type="domain">
    <text evidence="2">The EIIA domain is phosphorylated by phospho-HPr on a histidyl residue. Then, it transfers the phosphoryl group to the EIIB domain.</text>
</comment>
<feature type="chain" id="PRO_0000186542" description="PTS system glucose-specific EIIA component">
    <location>
        <begin position="1"/>
        <end position="154"/>
    </location>
</feature>
<feature type="domain" description="PTS EIIA type-1" evidence="2">
    <location>
        <begin position="26"/>
        <end position="130"/>
    </location>
</feature>
<feature type="active site" description="Tele-phosphohistidine intermediate; for EIIA activity" evidence="1 2">
    <location>
        <position position="78"/>
    </location>
</feature>
<feature type="binding site" evidence="1">
    <location>
        <position position="63"/>
    </location>
    <ligand>
        <name>Zn(2+)</name>
        <dbReference type="ChEBI" id="CHEBI:29105"/>
        <note>ligand shared with glycerol kinase</note>
    </ligand>
</feature>
<feature type="binding site" evidence="1">
    <location>
        <position position="78"/>
    </location>
    <ligand>
        <name>Zn(2+)</name>
        <dbReference type="ChEBI" id="CHEBI:29105"/>
        <note>ligand shared with glycerol kinase</note>
    </ligand>
</feature>
<feature type="site" description="Important for phospho-donor activity" evidence="1">
    <location>
        <position position="63"/>
    </location>
</feature>
<feature type="modified residue" description="Phosphohistidine; by HPr" evidence="1">
    <location>
        <position position="78"/>
    </location>
</feature>
<feature type="strand" evidence="6">
    <location>
        <begin position="8"/>
        <end position="11"/>
    </location>
</feature>
<feature type="strand" evidence="6">
    <location>
        <begin position="13"/>
        <end position="19"/>
    </location>
</feature>
<feature type="helix" evidence="6">
    <location>
        <begin position="21"/>
        <end position="23"/>
    </location>
</feature>
<feature type="helix" evidence="6">
    <location>
        <begin position="27"/>
        <end position="30"/>
    </location>
</feature>
<feature type="strand" evidence="6">
    <location>
        <begin position="36"/>
        <end position="48"/>
    </location>
</feature>
<feature type="strand" evidence="6">
    <location>
        <begin position="53"/>
        <end position="57"/>
    </location>
</feature>
<feature type="strand" evidence="6">
    <location>
        <begin position="63"/>
        <end position="68"/>
    </location>
</feature>
<feature type="strand" evidence="6">
    <location>
        <begin position="74"/>
        <end position="78"/>
    </location>
</feature>
<feature type="strand" evidence="6">
    <location>
        <begin position="80"/>
        <end position="82"/>
    </location>
</feature>
<feature type="helix" evidence="6">
    <location>
        <begin position="83"/>
        <end position="86"/>
    </location>
</feature>
<feature type="strand" evidence="6">
    <location>
        <begin position="90"/>
        <end position="93"/>
    </location>
</feature>
<feature type="strand" evidence="6">
    <location>
        <begin position="106"/>
        <end position="110"/>
    </location>
</feature>
<feature type="helix" evidence="6">
    <location>
        <begin position="112"/>
        <end position="118"/>
    </location>
</feature>
<feature type="strand" evidence="6">
    <location>
        <begin position="124"/>
        <end position="130"/>
    </location>
</feature>
<feature type="strand" evidence="6">
    <location>
        <begin position="142"/>
        <end position="144"/>
    </location>
</feature>
<feature type="strand" evidence="6">
    <location>
        <begin position="149"/>
        <end position="153"/>
    </location>
</feature>
<protein>
    <recommendedName>
        <fullName evidence="3">PTS system glucose-specific EIIA component</fullName>
    </recommendedName>
    <alternativeName>
        <fullName evidence="3">EIIA-Glc</fullName>
    </alternativeName>
    <alternativeName>
        <fullName evidence="1">EIII-Glc</fullName>
    </alternativeName>
    <alternativeName>
        <fullName evidence="1">Glucose-specific phosphotransferase enzyme IIA component</fullName>
    </alternativeName>
</protein>
<accession>P45618</accession>
<accession>Q2SSP2</accession>
<organism>
    <name type="scientific">Mycoplasma capricolum subsp. capricolum (strain California kid / ATCC 27343 / NCTC 10154)</name>
    <dbReference type="NCBI Taxonomy" id="340047"/>
    <lineage>
        <taxon>Bacteria</taxon>
        <taxon>Bacillati</taxon>
        <taxon>Mycoplasmatota</taxon>
        <taxon>Mollicutes</taxon>
        <taxon>Mycoplasmataceae</taxon>
        <taxon>Mycoplasma</taxon>
    </lineage>
</organism>
<dbReference type="EMBL" id="U15110">
    <property type="protein sequence ID" value="AAA70407.1"/>
    <property type="molecule type" value="Genomic_DNA"/>
</dbReference>
<dbReference type="EMBL" id="CP000123">
    <property type="protein sequence ID" value="ABC01309.1"/>
    <property type="molecule type" value="Genomic_DNA"/>
</dbReference>
<dbReference type="RefSeq" id="WP_011387122.1">
    <property type="nucleotide sequence ID" value="NC_007633.1"/>
</dbReference>
<dbReference type="PDB" id="2GPR">
    <property type="method" value="X-ray"/>
    <property type="resolution" value="2.50 A"/>
    <property type="chains" value="A=1-154"/>
</dbReference>
<dbReference type="PDBsum" id="2GPR"/>
<dbReference type="SMR" id="P45618"/>
<dbReference type="GeneID" id="23778813"/>
<dbReference type="KEGG" id="mcp:MCAP_0234"/>
<dbReference type="HOGENOM" id="CLU_012312_5_1_14"/>
<dbReference type="PhylomeDB" id="P45618"/>
<dbReference type="EvolutionaryTrace" id="P45618"/>
<dbReference type="Proteomes" id="UP000001928">
    <property type="component" value="Chromosome"/>
</dbReference>
<dbReference type="GO" id="GO:0005737">
    <property type="term" value="C:cytoplasm"/>
    <property type="evidence" value="ECO:0007669"/>
    <property type="project" value="UniProtKB-SubCell"/>
</dbReference>
<dbReference type="GO" id="GO:0016301">
    <property type="term" value="F:kinase activity"/>
    <property type="evidence" value="ECO:0007669"/>
    <property type="project" value="UniProtKB-KW"/>
</dbReference>
<dbReference type="GO" id="GO:0046872">
    <property type="term" value="F:metal ion binding"/>
    <property type="evidence" value="ECO:0007669"/>
    <property type="project" value="UniProtKB-KW"/>
</dbReference>
<dbReference type="GO" id="GO:0009401">
    <property type="term" value="P:phosphoenolpyruvate-dependent sugar phosphotransferase system"/>
    <property type="evidence" value="ECO:0007669"/>
    <property type="project" value="UniProtKB-KW"/>
</dbReference>
<dbReference type="CDD" id="cd00210">
    <property type="entry name" value="PTS_IIA_glc"/>
    <property type="match status" value="1"/>
</dbReference>
<dbReference type="FunFam" id="2.70.70.10:FF:000001">
    <property type="entry name" value="PTS system glucose-specific IIA component"/>
    <property type="match status" value="1"/>
</dbReference>
<dbReference type="Gene3D" id="2.70.70.10">
    <property type="entry name" value="Glucose Permease (Domain IIA)"/>
    <property type="match status" value="1"/>
</dbReference>
<dbReference type="InterPro" id="IPR011055">
    <property type="entry name" value="Dup_hybrid_motif"/>
</dbReference>
<dbReference type="InterPro" id="IPR001127">
    <property type="entry name" value="PTS_EIIA_1_perm"/>
</dbReference>
<dbReference type="InterPro" id="IPR050890">
    <property type="entry name" value="PTS_EIIA_component"/>
</dbReference>
<dbReference type="NCBIfam" id="TIGR00830">
    <property type="entry name" value="PTBA"/>
    <property type="match status" value="1"/>
</dbReference>
<dbReference type="PANTHER" id="PTHR45008">
    <property type="entry name" value="PTS SYSTEM GLUCOSE-SPECIFIC EIIA COMPONENT"/>
    <property type="match status" value="1"/>
</dbReference>
<dbReference type="PANTHER" id="PTHR45008:SF1">
    <property type="entry name" value="PTS SYSTEM GLUCOSE-SPECIFIC EIIA COMPONENT"/>
    <property type="match status" value="1"/>
</dbReference>
<dbReference type="Pfam" id="PF00358">
    <property type="entry name" value="PTS_EIIA_1"/>
    <property type="match status" value="1"/>
</dbReference>
<dbReference type="SUPFAM" id="SSF51261">
    <property type="entry name" value="Duplicated hybrid motif"/>
    <property type="match status" value="1"/>
</dbReference>
<dbReference type="PROSITE" id="PS51093">
    <property type="entry name" value="PTS_EIIA_TYPE_1"/>
    <property type="match status" value="1"/>
</dbReference>
<dbReference type="PROSITE" id="PS00371">
    <property type="entry name" value="PTS_EIIA_TYPE_1_HIS"/>
    <property type="match status" value="1"/>
</dbReference>
<gene>
    <name type="primary">crr</name>
    <name type="ordered locus">MCAP_0234</name>
</gene>
<proteinExistence type="evidence at protein level"/>